<gene>
    <name evidence="1" type="primary">rsmA</name>
    <name evidence="1" type="synonym">ksgA</name>
    <name type="ordered locus">DehaBAV1_0383</name>
</gene>
<dbReference type="EC" id="2.1.1.182" evidence="1"/>
<dbReference type="EMBL" id="CP000688">
    <property type="protein sequence ID" value="ABQ16968.1"/>
    <property type="molecule type" value="Genomic_DNA"/>
</dbReference>
<dbReference type="SMR" id="A5FS52"/>
<dbReference type="KEGG" id="deb:DehaBAV1_0383"/>
<dbReference type="PATRIC" id="fig|216389.18.peg.424"/>
<dbReference type="HOGENOM" id="CLU_041220_0_0_0"/>
<dbReference type="GO" id="GO:0005829">
    <property type="term" value="C:cytosol"/>
    <property type="evidence" value="ECO:0007669"/>
    <property type="project" value="TreeGrafter"/>
</dbReference>
<dbReference type="GO" id="GO:0052908">
    <property type="term" value="F:16S rRNA (adenine(1518)-N(6)/adenine(1519)-N(6))-dimethyltransferase activity"/>
    <property type="evidence" value="ECO:0007669"/>
    <property type="project" value="UniProtKB-EC"/>
</dbReference>
<dbReference type="GO" id="GO:0003723">
    <property type="term" value="F:RNA binding"/>
    <property type="evidence" value="ECO:0007669"/>
    <property type="project" value="UniProtKB-KW"/>
</dbReference>
<dbReference type="CDD" id="cd02440">
    <property type="entry name" value="AdoMet_MTases"/>
    <property type="match status" value="1"/>
</dbReference>
<dbReference type="FunFam" id="3.40.50.150:FF:000023">
    <property type="entry name" value="Ribosomal RNA small subunit methyltransferase A"/>
    <property type="match status" value="1"/>
</dbReference>
<dbReference type="Gene3D" id="1.10.8.100">
    <property type="entry name" value="Ribosomal RNA adenine dimethylase-like, domain 2"/>
    <property type="match status" value="1"/>
</dbReference>
<dbReference type="Gene3D" id="3.40.50.150">
    <property type="entry name" value="Vaccinia Virus protein VP39"/>
    <property type="match status" value="1"/>
</dbReference>
<dbReference type="HAMAP" id="MF_00607">
    <property type="entry name" value="16SrRNA_methyltr_A"/>
    <property type="match status" value="1"/>
</dbReference>
<dbReference type="InterPro" id="IPR001737">
    <property type="entry name" value="KsgA/Erm"/>
</dbReference>
<dbReference type="InterPro" id="IPR023165">
    <property type="entry name" value="rRNA_Ade_diMease-like_C"/>
</dbReference>
<dbReference type="InterPro" id="IPR020596">
    <property type="entry name" value="rRNA_Ade_Mease_Trfase_CS"/>
</dbReference>
<dbReference type="InterPro" id="IPR020598">
    <property type="entry name" value="rRNA_Ade_methylase_Trfase_N"/>
</dbReference>
<dbReference type="InterPro" id="IPR011530">
    <property type="entry name" value="rRNA_adenine_dimethylase"/>
</dbReference>
<dbReference type="InterPro" id="IPR029063">
    <property type="entry name" value="SAM-dependent_MTases_sf"/>
</dbReference>
<dbReference type="NCBIfam" id="TIGR00755">
    <property type="entry name" value="ksgA"/>
    <property type="match status" value="1"/>
</dbReference>
<dbReference type="PANTHER" id="PTHR11727">
    <property type="entry name" value="DIMETHYLADENOSINE TRANSFERASE"/>
    <property type="match status" value="1"/>
</dbReference>
<dbReference type="PANTHER" id="PTHR11727:SF7">
    <property type="entry name" value="DIMETHYLADENOSINE TRANSFERASE-RELATED"/>
    <property type="match status" value="1"/>
</dbReference>
<dbReference type="Pfam" id="PF00398">
    <property type="entry name" value="RrnaAD"/>
    <property type="match status" value="1"/>
</dbReference>
<dbReference type="SMART" id="SM00650">
    <property type="entry name" value="rADc"/>
    <property type="match status" value="1"/>
</dbReference>
<dbReference type="SUPFAM" id="SSF53335">
    <property type="entry name" value="S-adenosyl-L-methionine-dependent methyltransferases"/>
    <property type="match status" value="1"/>
</dbReference>
<dbReference type="PROSITE" id="PS01131">
    <property type="entry name" value="RRNA_A_DIMETH"/>
    <property type="match status" value="1"/>
</dbReference>
<dbReference type="PROSITE" id="PS51689">
    <property type="entry name" value="SAM_RNA_A_N6_MT"/>
    <property type="match status" value="1"/>
</dbReference>
<name>RSMA_DEHMB</name>
<keyword id="KW-0963">Cytoplasm</keyword>
<keyword id="KW-0489">Methyltransferase</keyword>
<keyword id="KW-0694">RNA-binding</keyword>
<keyword id="KW-0698">rRNA processing</keyword>
<keyword id="KW-0949">S-adenosyl-L-methionine</keyword>
<keyword id="KW-0808">Transferase</keyword>
<accession>A5FS52</accession>
<protein>
    <recommendedName>
        <fullName evidence="1">Ribosomal RNA small subunit methyltransferase A</fullName>
        <ecNumber evidence="1">2.1.1.182</ecNumber>
    </recommendedName>
    <alternativeName>
        <fullName evidence="1">16S rRNA (adenine(1518)-N(6)/adenine(1519)-N(6))-dimethyltransferase</fullName>
    </alternativeName>
    <alternativeName>
        <fullName evidence="1">16S rRNA dimethyladenosine transferase</fullName>
    </alternativeName>
    <alternativeName>
        <fullName evidence="1">16S rRNA dimethylase</fullName>
    </alternativeName>
    <alternativeName>
        <fullName evidence="1">S-adenosylmethionine-6-N', N'-adenosyl(rRNA) dimethyltransferase</fullName>
    </alternativeName>
</protein>
<reference key="1">
    <citation type="submission" date="2007-05" db="EMBL/GenBank/DDBJ databases">
        <title>Complete sequence of Dehalococcoides sp. BAV1.</title>
        <authorList>
            <consortium name="US DOE Joint Genome Institute"/>
            <person name="Copeland A."/>
            <person name="Lucas S."/>
            <person name="Lapidus A."/>
            <person name="Barry K."/>
            <person name="Detter J.C."/>
            <person name="Glavina del Rio T."/>
            <person name="Hammon N."/>
            <person name="Israni S."/>
            <person name="Pitluck S."/>
            <person name="Lowry S."/>
            <person name="Clum A."/>
            <person name="Schmutz J."/>
            <person name="Larimer F."/>
            <person name="Land M."/>
            <person name="Hauser L."/>
            <person name="Kyrpides N."/>
            <person name="Kim E."/>
            <person name="Ritalahti K.M."/>
            <person name="Loeffler F."/>
            <person name="Richardson P."/>
        </authorList>
    </citation>
    <scope>NUCLEOTIDE SEQUENCE [LARGE SCALE GENOMIC DNA]</scope>
    <source>
        <strain>ATCC BAA-2100 / JCM 16839 / KCTC 5957 / BAV1</strain>
    </source>
</reference>
<comment type="function">
    <text evidence="1">Specifically dimethylates two adjacent adenosines (A1518 and A1519) in the loop of a conserved hairpin near the 3'-end of 16S rRNA in the 30S particle. May play a critical role in biogenesis of 30S subunits.</text>
</comment>
<comment type="catalytic activity">
    <reaction evidence="1">
        <text>adenosine(1518)/adenosine(1519) in 16S rRNA + 4 S-adenosyl-L-methionine = N(6)-dimethyladenosine(1518)/N(6)-dimethyladenosine(1519) in 16S rRNA + 4 S-adenosyl-L-homocysteine + 4 H(+)</text>
        <dbReference type="Rhea" id="RHEA:19609"/>
        <dbReference type="Rhea" id="RHEA-COMP:10232"/>
        <dbReference type="Rhea" id="RHEA-COMP:10233"/>
        <dbReference type="ChEBI" id="CHEBI:15378"/>
        <dbReference type="ChEBI" id="CHEBI:57856"/>
        <dbReference type="ChEBI" id="CHEBI:59789"/>
        <dbReference type="ChEBI" id="CHEBI:74411"/>
        <dbReference type="ChEBI" id="CHEBI:74493"/>
        <dbReference type="EC" id="2.1.1.182"/>
    </reaction>
</comment>
<comment type="subcellular location">
    <subcellularLocation>
        <location evidence="1">Cytoplasm</location>
    </subcellularLocation>
</comment>
<comment type="similarity">
    <text evidence="1">Belongs to the class I-like SAM-binding methyltransferase superfamily. rRNA adenine N(6)-methyltransferase family. RsmA subfamily.</text>
</comment>
<feature type="chain" id="PRO_1000082549" description="Ribosomal RNA small subunit methyltransferase A">
    <location>
        <begin position="1"/>
        <end position="291"/>
    </location>
</feature>
<feature type="binding site" evidence="1">
    <location>
        <position position="37"/>
    </location>
    <ligand>
        <name>S-adenosyl-L-methionine</name>
        <dbReference type="ChEBI" id="CHEBI:59789"/>
    </ligand>
</feature>
<feature type="binding site" evidence="1">
    <location>
        <position position="39"/>
    </location>
    <ligand>
        <name>S-adenosyl-L-methionine</name>
        <dbReference type="ChEBI" id="CHEBI:59789"/>
    </ligand>
</feature>
<feature type="binding site" evidence="1">
    <location>
        <position position="64"/>
    </location>
    <ligand>
        <name>S-adenosyl-L-methionine</name>
        <dbReference type="ChEBI" id="CHEBI:59789"/>
    </ligand>
</feature>
<feature type="binding site" evidence="1">
    <location>
        <position position="85"/>
    </location>
    <ligand>
        <name>S-adenosyl-L-methionine</name>
        <dbReference type="ChEBI" id="CHEBI:59789"/>
    </ligand>
</feature>
<feature type="binding site" evidence="1">
    <location>
        <position position="110"/>
    </location>
    <ligand>
        <name>S-adenosyl-L-methionine</name>
        <dbReference type="ChEBI" id="CHEBI:59789"/>
    </ligand>
</feature>
<feature type="binding site" evidence="1">
    <location>
        <position position="131"/>
    </location>
    <ligand>
        <name>S-adenosyl-L-methionine</name>
        <dbReference type="ChEBI" id="CHEBI:59789"/>
    </ligand>
</feature>
<evidence type="ECO:0000255" key="1">
    <source>
        <dbReference type="HAMAP-Rule" id="MF_00607"/>
    </source>
</evidence>
<organism>
    <name type="scientific">Dehalococcoides mccartyi (strain ATCC BAA-2100 / JCM 16839 / KCTC 5957 / BAV1)</name>
    <dbReference type="NCBI Taxonomy" id="216389"/>
    <lineage>
        <taxon>Bacteria</taxon>
        <taxon>Bacillati</taxon>
        <taxon>Chloroflexota</taxon>
        <taxon>Dehalococcoidia</taxon>
        <taxon>Dehalococcoidales</taxon>
        <taxon>Dehalococcoidaceae</taxon>
        <taxon>Dehalococcoides</taxon>
    </lineage>
</organism>
<sequence length="291" mass="31506">MGKDVPLLVASAPSLMAQAKEMMEGYTLKARKGLGQHFLISQGVLNKILAAADLKPTDTVIEVGPGLGVLTEELLKRAGQVIAVEVDDKLIDALTEKFKGYPNFRLIHSDILKTSPEEILGQNVPYKLVANLPYYITSAVLRQFLEAKLKPESMVVMVQKEVAKNIVAKTGDMGLLTLSIRFYGNPSLVSVVPGGAFYPPPEVDSAIVKIVIPQTTIMEGVSEVDFFKLARAGFGTRRKTLLNALAQGLGISKPVILSLLNGAGIDPARRAETLSMEEWKKLCLEYAGNPC</sequence>
<proteinExistence type="inferred from homology"/>